<protein>
    <recommendedName>
        <fullName>Electron transfer flavoprotein subunit beta</fullName>
        <shortName>Beta-ETF</shortName>
    </recommendedName>
    <alternativeName>
        <fullName>Electron transfer flavoprotein small subunit</fullName>
        <shortName>ETFSS</shortName>
    </alternativeName>
</protein>
<comment type="function">
    <text evidence="1">The electron transfer flavoprotein serves as a specific electron acceptor for other dehydrogenases. It transfers the electrons to the main respiratory chain via ETF-ubiquinone oxidoreductase (ETF dehydrogenase) (By similarity).</text>
</comment>
<comment type="cofactor">
    <cofactor evidence="1">
        <name>FAD</name>
        <dbReference type="ChEBI" id="CHEBI:57692"/>
    </cofactor>
    <text evidence="1">Binds 1 FAD per dimer.</text>
</comment>
<comment type="cofactor">
    <cofactor evidence="1">
        <name>AMP</name>
        <dbReference type="ChEBI" id="CHEBI:456215"/>
    </cofactor>
    <text evidence="1">Binds 1 AMP per subunit.</text>
</comment>
<comment type="subunit">
    <text>Heterodimer of an alpha and a beta subunit.</text>
</comment>
<comment type="similarity">
    <text evidence="2">Belongs to the ETF beta-subunit/FixA family.</text>
</comment>
<gene>
    <name type="primary">etfB</name>
    <name type="ordered locus">CA_C2710</name>
</gene>
<keyword id="KW-0249">Electron transport</keyword>
<keyword id="KW-0274">FAD</keyword>
<keyword id="KW-0285">Flavoprotein</keyword>
<keyword id="KW-1185">Reference proteome</keyword>
<keyword id="KW-0813">Transport</keyword>
<accession>P52040</accession>
<proteinExistence type="inferred from homology"/>
<name>ETFB_CLOAB</name>
<dbReference type="EMBL" id="U17110">
    <property type="protein sequence ID" value="AAA95969.1"/>
    <property type="molecule type" value="Genomic_DNA"/>
</dbReference>
<dbReference type="EMBL" id="AE001437">
    <property type="protein sequence ID" value="AAK80656.1"/>
    <property type="molecule type" value="Genomic_DNA"/>
</dbReference>
<dbReference type="PIR" id="E97233">
    <property type="entry name" value="E97233"/>
</dbReference>
<dbReference type="PIR" id="T47263">
    <property type="entry name" value="T47263"/>
</dbReference>
<dbReference type="RefSeq" id="NP_349316.1">
    <property type="nucleotide sequence ID" value="NC_003030.1"/>
</dbReference>
<dbReference type="RefSeq" id="WP_010965997.1">
    <property type="nucleotide sequence ID" value="NC_003030.1"/>
</dbReference>
<dbReference type="SMR" id="P52040"/>
<dbReference type="STRING" id="272562.CA_C2710"/>
<dbReference type="KEGG" id="cac:CA_C2710"/>
<dbReference type="PATRIC" id="fig|272562.8.peg.2900"/>
<dbReference type="eggNOG" id="COG2086">
    <property type="taxonomic scope" value="Bacteria"/>
</dbReference>
<dbReference type="HOGENOM" id="CLU_060196_2_1_9"/>
<dbReference type="OrthoDB" id="9804960at2"/>
<dbReference type="BioCyc" id="MetaCyc:MONOMER-21350"/>
<dbReference type="Proteomes" id="UP000000814">
    <property type="component" value="Chromosome"/>
</dbReference>
<dbReference type="GO" id="GO:0009055">
    <property type="term" value="F:electron transfer activity"/>
    <property type="evidence" value="ECO:0007669"/>
    <property type="project" value="InterPro"/>
</dbReference>
<dbReference type="CDD" id="cd01714">
    <property type="entry name" value="ETF_beta"/>
    <property type="match status" value="1"/>
</dbReference>
<dbReference type="Gene3D" id="3.40.50.620">
    <property type="entry name" value="HUPs"/>
    <property type="match status" value="1"/>
</dbReference>
<dbReference type="InterPro" id="IPR000049">
    <property type="entry name" value="ET-Flavoprotein_bsu_CS"/>
</dbReference>
<dbReference type="InterPro" id="IPR014730">
    <property type="entry name" value="ETF_a/b_N"/>
</dbReference>
<dbReference type="InterPro" id="IPR012255">
    <property type="entry name" value="ETF_b"/>
</dbReference>
<dbReference type="InterPro" id="IPR033948">
    <property type="entry name" value="ETF_beta_N"/>
</dbReference>
<dbReference type="InterPro" id="IPR014729">
    <property type="entry name" value="Rossmann-like_a/b/a_fold"/>
</dbReference>
<dbReference type="PANTHER" id="PTHR21294">
    <property type="entry name" value="ELECTRON TRANSFER FLAVOPROTEIN BETA-SUBUNIT"/>
    <property type="match status" value="1"/>
</dbReference>
<dbReference type="PANTHER" id="PTHR21294:SF17">
    <property type="entry name" value="PROTEIN FIXA"/>
    <property type="match status" value="1"/>
</dbReference>
<dbReference type="Pfam" id="PF01012">
    <property type="entry name" value="ETF"/>
    <property type="match status" value="1"/>
</dbReference>
<dbReference type="PIRSF" id="PIRSF000090">
    <property type="entry name" value="Beta-ETF"/>
    <property type="match status" value="1"/>
</dbReference>
<dbReference type="SMART" id="SM00893">
    <property type="entry name" value="ETF"/>
    <property type="match status" value="1"/>
</dbReference>
<dbReference type="SUPFAM" id="SSF52402">
    <property type="entry name" value="Adenine nucleotide alpha hydrolases-like"/>
    <property type="match status" value="1"/>
</dbReference>
<dbReference type="PROSITE" id="PS01065">
    <property type="entry name" value="ETF_BETA"/>
    <property type="match status" value="1"/>
</dbReference>
<feature type="chain" id="PRO_0000167877" description="Electron transfer flavoprotein subunit beta">
    <location>
        <begin position="1"/>
        <end position="259"/>
    </location>
</feature>
<feature type="sequence conflict" description="In Ref. 1; AAA95969." evidence="2" ref="1">
    <original>AYVVSKLKEEHYI</original>
    <variation>DMLSQN</variation>
    <location>
        <begin position="247"/>
        <end position="259"/>
    </location>
</feature>
<evidence type="ECO:0000250" key="1"/>
<evidence type="ECO:0000305" key="2"/>
<reference key="1">
    <citation type="journal article" date="1996" name="J. Bacteriol.">
        <title>Cloning, sequencing, and expression of clustered genes encoding beta-hydroxybutyryl-coenzyme A (CoA) dehydrogenase, crotonase, and butyryl-CoA dehydrogenase from Clostridium acetobutylicum ATCC 824.</title>
        <authorList>
            <person name="Boynton Z.L."/>
            <person name="Bennett G.N."/>
            <person name="Rudolph F.B."/>
        </authorList>
    </citation>
    <scope>NUCLEOTIDE SEQUENCE [GENOMIC DNA]</scope>
    <source>
        <strain>ATCC 824 / DSM 792 / JCM 1419 / IAM 19013 / LMG 5710 / NBRC 13948 / NRRL B-527 / VKM B-1787 / 2291 / W</strain>
    </source>
</reference>
<reference key="2">
    <citation type="journal article" date="2001" name="J. Bacteriol.">
        <title>Genome sequence and comparative analysis of the solvent-producing bacterium Clostridium acetobutylicum.</title>
        <authorList>
            <person name="Noelling J."/>
            <person name="Breton G."/>
            <person name="Omelchenko M.V."/>
            <person name="Makarova K.S."/>
            <person name="Zeng Q."/>
            <person name="Gibson R."/>
            <person name="Lee H.M."/>
            <person name="Dubois J."/>
            <person name="Qiu D."/>
            <person name="Hitti J."/>
            <person name="Wolf Y.I."/>
            <person name="Tatusov R.L."/>
            <person name="Sabathe F."/>
            <person name="Doucette-Stamm L.A."/>
            <person name="Soucaille P."/>
            <person name="Daly M.J."/>
            <person name="Bennett G.N."/>
            <person name="Koonin E.V."/>
            <person name="Smith D.R."/>
        </authorList>
    </citation>
    <scope>NUCLEOTIDE SEQUENCE [LARGE SCALE GENOMIC DNA]</scope>
    <source>
        <strain>ATCC 824 / DSM 792 / JCM 1419 / IAM 19013 / LMG 5710 / NBRC 13948 / NRRL B-527 / VKM B-1787 / 2291 / W</strain>
    </source>
</reference>
<sequence>MNIVVCLKQVPDTAEVRIDPVKGTLIREGVPSIINPDDKNALEEALVLKDNYGAHVTVISMGPPQAKNALVEALAMGADEAVLLTDRAFGGADTLATSHTIAAGIKKLKYDIVFAGRQAIDGDTAQVGPEIAEHLGIPQVTYVEKVEVDGDTLKIRKAWEDGYEVVEVKTPVLLTAIKELNVPRYMSVEKIFGAFDKEVKMWTADDIDVDKANLGLKGSPTKVKKSSTKEVKGQGEVIDKPVKEAAAYVVSKLKEEHYI</sequence>
<organism>
    <name type="scientific">Clostridium acetobutylicum (strain ATCC 824 / DSM 792 / JCM 1419 / IAM 19013 / LMG 5710 / NBRC 13948 / NRRL B-527 / VKM B-1787 / 2291 / W)</name>
    <dbReference type="NCBI Taxonomy" id="272562"/>
    <lineage>
        <taxon>Bacteria</taxon>
        <taxon>Bacillati</taxon>
        <taxon>Bacillota</taxon>
        <taxon>Clostridia</taxon>
        <taxon>Eubacteriales</taxon>
        <taxon>Clostridiaceae</taxon>
        <taxon>Clostridium</taxon>
    </lineage>
</organism>